<keyword id="KW-0328">Glycosyltransferase</keyword>
<keyword id="KW-0479">Metal-binding</keyword>
<keyword id="KW-0808">Transferase</keyword>
<keyword id="KW-0819">tRNA processing</keyword>
<keyword id="KW-0862">Zinc</keyword>
<accession>A6UVD8</accession>
<proteinExistence type="inferred from homology"/>
<gene>
    <name evidence="1" type="primary">tgtA</name>
    <name type="ordered locus">Maeo_0878</name>
</gene>
<dbReference type="EC" id="2.4.2.48" evidence="1"/>
<dbReference type="EMBL" id="CP000743">
    <property type="protein sequence ID" value="ABR56460.1"/>
    <property type="molecule type" value="Genomic_DNA"/>
</dbReference>
<dbReference type="RefSeq" id="WP_011973592.1">
    <property type="nucleotide sequence ID" value="NC_009635.1"/>
</dbReference>
<dbReference type="SMR" id="A6UVD8"/>
<dbReference type="STRING" id="419665.Maeo_0878"/>
<dbReference type="GeneID" id="5326446"/>
<dbReference type="KEGG" id="mae:Maeo_0878"/>
<dbReference type="eggNOG" id="arCOG00989">
    <property type="taxonomic scope" value="Archaea"/>
</dbReference>
<dbReference type="eggNOG" id="arCOG00991">
    <property type="taxonomic scope" value="Archaea"/>
</dbReference>
<dbReference type="HOGENOM" id="CLU_030083_0_0_2"/>
<dbReference type="OrthoDB" id="6871at2157"/>
<dbReference type="UniPathway" id="UPA00393"/>
<dbReference type="Proteomes" id="UP000001106">
    <property type="component" value="Chromosome"/>
</dbReference>
<dbReference type="GO" id="GO:0005737">
    <property type="term" value="C:cytoplasm"/>
    <property type="evidence" value="ECO:0007669"/>
    <property type="project" value="TreeGrafter"/>
</dbReference>
<dbReference type="GO" id="GO:0016763">
    <property type="term" value="F:pentosyltransferase activity"/>
    <property type="evidence" value="ECO:0007669"/>
    <property type="project" value="UniProtKB-UniRule"/>
</dbReference>
<dbReference type="GO" id="GO:0003723">
    <property type="term" value="F:RNA binding"/>
    <property type="evidence" value="ECO:0007669"/>
    <property type="project" value="InterPro"/>
</dbReference>
<dbReference type="GO" id="GO:0008270">
    <property type="term" value="F:zinc ion binding"/>
    <property type="evidence" value="ECO:0007669"/>
    <property type="project" value="UniProtKB-UniRule"/>
</dbReference>
<dbReference type="GO" id="GO:0002099">
    <property type="term" value="P:tRNA wobble guanine modification"/>
    <property type="evidence" value="ECO:0007669"/>
    <property type="project" value="TreeGrafter"/>
</dbReference>
<dbReference type="CDD" id="cd21149">
    <property type="entry name" value="PUA_archaeosine_TGT"/>
    <property type="match status" value="1"/>
</dbReference>
<dbReference type="Gene3D" id="3.90.1020.10">
    <property type="entry name" value="ArcTGT, C1 domain"/>
    <property type="match status" value="1"/>
</dbReference>
<dbReference type="Gene3D" id="3.10.450.90">
    <property type="entry name" value="ArcTGT, C2 domain"/>
    <property type="match status" value="1"/>
</dbReference>
<dbReference type="Gene3D" id="2.30.130.10">
    <property type="entry name" value="PUA domain"/>
    <property type="match status" value="1"/>
</dbReference>
<dbReference type="Gene3D" id="3.20.20.105">
    <property type="entry name" value="Queuine tRNA-ribosyltransferase-like"/>
    <property type="match status" value="1"/>
</dbReference>
<dbReference type="HAMAP" id="MF_01634">
    <property type="entry name" value="TgtA_arch"/>
    <property type="match status" value="1"/>
</dbReference>
<dbReference type="InterPro" id="IPR050076">
    <property type="entry name" value="ArchSynthase1/Queuine_TRR"/>
</dbReference>
<dbReference type="InterPro" id="IPR038370">
    <property type="entry name" value="ArcTGT_C1_sf"/>
</dbReference>
<dbReference type="InterPro" id="IPR002478">
    <property type="entry name" value="PUA"/>
</dbReference>
<dbReference type="InterPro" id="IPR015947">
    <property type="entry name" value="PUA-like_sf"/>
</dbReference>
<dbReference type="InterPro" id="IPR036974">
    <property type="entry name" value="PUA_sf"/>
</dbReference>
<dbReference type="InterPro" id="IPR036511">
    <property type="entry name" value="TGT-like_sf"/>
</dbReference>
<dbReference type="InterPro" id="IPR029402">
    <property type="entry name" value="TGT_C2"/>
</dbReference>
<dbReference type="InterPro" id="IPR038250">
    <property type="entry name" value="TGT_C2_sf"/>
</dbReference>
<dbReference type="InterPro" id="IPR004804">
    <property type="entry name" value="TgtA"/>
</dbReference>
<dbReference type="InterPro" id="IPR002616">
    <property type="entry name" value="tRNA_ribo_trans-like"/>
</dbReference>
<dbReference type="InterPro" id="IPR004521">
    <property type="entry name" value="Uncharacterised_CHP00451"/>
</dbReference>
<dbReference type="NCBIfam" id="TIGR00432">
    <property type="entry name" value="arcsn_tRNA_tgt"/>
    <property type="match status" value="1"/>
</dbReference>
<dbReference type="NCBIfam" id="TIGR00449">
    <property type="entry name" value="tgt_general"/>
    <property type="match status" value="1"/>
</dbReference>
<dbReference type="NCBIfam" id="TIGR00451">
    <property type="entry name" value="unchar_dom_2"/>
    <property type="match status" value="1"/>
</dbReference>
<dbReference type="PANTHER" id="PTHR46499">
    <property type="entry name" value="QUEUINE TRNA-RIBOSYLTRANSFERASE"/>
    <property type="match status" value="1"/>
</dbReference>
<dbReference type="PANTHER" id="PTHR46499:SF1">
    <property type="entry name" value="QUEUINE TRNA-RIBOSYLTRANSFERASE"/>
    <property type="match status" value="1"/>
</dbReference>
<dbReference type="Pfam" id="PF01472">
    <property type="entry name" value="PUA"/>
    <property type="match status" value="1"/>
</dbReference>
<dbReference type="Pfam" id="PF01702">
    <property type="entry name" value="TGT"/>
    <property type="match status" value="1"/>
</dbReference>
<dbReference type="Pfam" id="PF14810">
    <property type="entry name" value="TGT_C2"/>
    <property type="match status" value="1"/>
</dbReference>
<dbReference type="SMART" id="SM00359">
    <property type="entry name" value="PUA"/>
    <property type="match status" value="1"/>
</dbReference>
<dbReference type="SUPFAM" id="SSF88802">
    <property type="entry name" value="Pre-PUA domain"/>
    <property type="match status" value="1"/>
</dbReference>
<dbReference type="SUPFAM" id="SSF88697">
    <property type="entry name" value="PUA domain-like"/>
    <property type="match status" value="1"/>
</dbReference>
<dbReference type="SUPFAM" id="SSF51713">
    <property type="entry name" value="tRNA-guanine transglycosylase"/>
    <property type="match status" value="1"/>
</dbReference>
<dbReference type="PROSITE" id="PS50890">
    <property type="entry name" value="PUA"/>
    <property type="match status" value="1"/>
</dbReference>
<comment type="function">
    <text evidence="1">Exchanges the guanine residue with 7-cyano-7-deazaguanine (preQ0) at position 15 in the dihydrouridine loop (D-loop) of archaeal tRNAs.</text>
</comment>
<comment type="catalytic activity">
    <reaction evidence="1">
        <text>guanosine(15) in tRNA + 7-cyano-7-deazaguanine = 7-cyano-7-carbaguanosine(15) in tRNA + guanine</text>
        <dbReference type="Rhea" id="RHEA:43164"/>
        <dbReference type="Rhea" id="RHEA-COMP:10371"/>
        <dbReference type="Rhea" id="RHEA-COMP:10372"/>
        <dbReference type="ChEBI" id="CHEBI:16235"/>
        <dbReference type="ChEBI" id="CHEBI:45075"/>
        <dbReference type="ChEBI" id="CHEBI:74269"/>
        <dbReference type="ChEBI" id="CHEBI:82850"/>
        <dbReference type="EC" id="2.4.2.48"/>
    </reaction>
</comment>
<comment type="cofactor">
    <cofactor evidence="1">
        <name>Zn(2+)</name>
        <dbReference type="ChEBI" id="CHEBI:29105"/>
    </cofactor>
    <text evidence="1">Binds 1 zinc ion per subunit.</text>
</comment>
<comment type="pathway">
    <text evidence="1">tRNA modification; archaeosine-tRNA biosynthesis.</text>
</comment>
<comment type="similarity">
    <text evidence="1">Belongs to the archaeosine tRNA-ribosyltransferase family.</text>
</comment>
<protein>
    <recommendedName>
        <fullName evidence="1">tRNA-guanine(15) transglycosylase</fullName>
        <ecNumber evidence="1">2.4.2.48</ecNumber>
    </recommendedName>
    <alternativeName>
        <fullName evidence="1">7-cyano-7-deazaguanine tRNA-ribosyltransferase</fullName>
    </alternativeName>
    <alternativeName>
        <fullName evidence="1">Archaeal tRNA-guanine transglycosylase</fullName>
    </alternativeName>
</protein>
<organism>
    <name type="scientific">Methanococcus aeolicus (strain ATCC BAA-1280 / DSM 17508 / OCM 812 / Nankai-3)</name>
    <dbReference type="NCBI Taxonomy" id="419665"/>
    <lineage>
        <taxon>Archaea</taxon>
        <taxon>Methanobacteriati</taxon>
        <taxon>Methanobacteriota</taxon>
        <taxon>Methanomada group</taxon>
        <taxon>Methanococci</taxon>
        <taxon>Methanococcales</taxon>
        <taxon>Methanococcaceae</taxon>
        <taxon>Methanococcus</taxon>
    </lineage>
</organism>
<reference key="1">
    <citation type="submission" date="2007-06" db="EMBL/GenBank/DDBJ databases">
        <title>Complete sequence of Methanococcus aeolicus Nankai-3.</title>
        <authorList>
            <consortium name="US DOE Joint Genome Institute"/>
            <person name="Copeland A."/>
            <person name="Lucas S."/>
            <person name="Lapidus A."/>
            <person name="Barry K."/>
            <person name="Glavina del Rio T."/>
            <person name="Dalin E."/>
            <person name="Tice H."/>
            <person name="Pitluck S."/>
            <person name="Chain P."/>
            <person name="Malfatti S."/>
            <person name="Shin M."/>
            <person name="Vergez L."/>
            <person name="Schmutz J."/>
            <person name="Larimer F."/>
            <person name="Land M."/>
            <person name="Hauser L."/>
            <person name="Kyrpides N."/>
            <person name="Lykidis A."/>
            <person name="Sieprawska-Lupa M."/>
            <person name="Whitman W.B."/>
            <person name="Richardson P."/>
        </authorList>
    </citation>
    <scope>NUCLEOTIDE SEQUENCE [LARGE SCALE GENOMIC DNA]</scope>
    <source>
        <strain>ATCC BAA-1280 / DSM 17508 / OCM 812 / Nankai-3</strain>
    </source>
</reference>
<sequence>MFEIKHRDAMGRIGKLKINGKIIETPTIMPVVHPNPKKQTVSIEKIEKLASVIITNSYIINTNPELKKIAEEKGIHNLIGFDKVIVTDSGSFQLSVYGEITVEPEEIIEFQEKIGVDVGTILDIPTAPYVQREQAEEELKETLRRAELSVKLRDEKNYKLLLNGTIQGSTYMDLRQESAKKMKELDFDIYPIGAVVPLMENYDYAQVIEIILNSKKELPTNKPVHLFGCGHPMMFALSVALGCDLFDSAAYALYAKDGRYLTESGTLHLEDLKDLEKFPCSCPVCIEYTPKELAKMEKRKRTELLAEHNLYITFEEINRIKQAIKDGNLWELVEERCRAHPKLLEAYRKALEYNEFIEEFDPITKKSAFFYGGYESLYRPEIIRHKKRLERIKSDNIYITTISNDINRPYSENTNMMDSDALVLIKDDLFGLVPLSIDTVYPLSQCDNPKLYCYEKIHNNEFVEEFKQNNKDKIMDITSYNYYINHYTSNANKNKVGSDAIRINNMIQYQYGFKLNDEELKKLIIKRSKKTNRIRNVLIPTDGNNKEVLFTLRSNDNLLIPAKEGAKLIHEKLPFPKYRVVIDSEVEEFARDGKSVFSKFVINCDKELRPYEEVIIVNENDELLAYGTTLLNGKELGEFNYGAAVSVRSGFK</sequence>
<name>ATGT_META3</name>
<evidence type="ECO:0000255" key="1">
    <source>
        <dbReference type="HAMAP-Rule" id="MF_01634"/>
    </source>
</evidence>
<feature type="chain" id="PRO_1000088165" description="tRNA-guanine(15) transglycosylase">
    <location>
        <begin position="1"/>
        <end position="652"/>
    </location>
</feature>
<feature type="domain" description="PUA" evidence="1">
    <location>
        <begin position="577"/>
        <end position="652"/>
    </location>
</feature>
<feature type="active site" description="Nucleophile" evidence="1">
    <location>
        <position position="88"/>
    </location>
</feature>
<feature type="binding site" evidence="1">
    <location>
        <position position="123"/>
    </location>
    <ligand>
        <name>substrate</name>
    </ligand>
</feature>
<feature type="binding site" evidence="1">
    <location>
        <position position="194"/>
    </location>
    <ligand>
        <name>substrate</name>
    </ligand>
</feature>
<feature type="binding site" evidence="1">
    <location>
        <position position="280"/>
    </location>
    <ligand>
        <name>Zn(2+)</name>
        <dbReference type="ChEBI" id="CHEBI:29105"/>
    </ligand>
</feature>
<feature type="binding site" evidence="1">
    <location>
        <position position="282"/>
    </location>
    <ligand>
        <name>Zn(2+)</name>
        <dbReference type="ChEBI" id="CHEBI:29105"/>
    </ligand>
</feature>
<feature type="binding site" evidence="1">
    <location>
        <position position="285"/>
    </location>
    <ligand>
        <name>Zn(2+)</name>
        <dbReference type="ChEBI" id="CHEBI:29105"/>
    </ligand>
</feature>